<reference key="1">
    <citation type="journal article" date="1996" name="Science">
        <title>Complete genome sequence of the methanogenic archaeon, Methanococcus jannaschii.</title>
        <authorList>
            <person name="Bult C.J."/>
            <person name="White O."/>
            <person name="Olsen G.J."/>
            <person name="Zhou L."/>
            <person name="Fleischmann R.D."/>
            <person name="Sutton G.G."/>
            <person name="Blake J.A."/>
            <person name="FitzGerald L.M."/>
            <person name="Clayton R.A."/>
            <person name="Gocayne J.D."/>
            <person name="Kerlavage A.R."/>
            <person name="Dougherty B.A."/>
            <person name="Tomb J.-F."/>
            <person name="Adams M.D."/>
            <person name="Reich C.I."/>
            <person name="Overbeek R."/>
            <person name="Kirkness E.F."/>
            <person name="Weinstock K.G."/>
            <person name="Merrick J.M."/>
            <person name="Glodek A."/>
            <person name="Scott J.L."/>
            <person name="Geoghagen N.S.M."/>
            <person name="Weidman J.F."/>
            <person name="Fuhrmann J.L."/>
            <person name="Nguyen D."/>
            <person name="Utterback T.R."/>
            <person name="Kelley J.M."/>
            <person name="Peterson J.D."/>
            <person name="Sadow P.W."/>
            <person name="Hanna M.C."/>
            <person name="Cotton M.D."/>
            <person name="Roberts K.M."/>
            <person name="Hurst M.A."/>
            <person name="Kaine B.P."/>
            <person name="Borodovsky M."/>
            <person name="Klenk H.-P."/>
            <person name="Fraser C.M."/>
            <person name="Smith H.O."/>
            <person name="Woese C.R."/>
            <person name="Venter J.C."/>
        </authorList>
    </citation>
    <scope>NUCLEOTIDE SEQUENCE [LARGE SCALE GENOMIC DNA]</scope>
    <source>
        <strain>ATCC 43067 / DSM 2661 / JAL-1 / JCM 10045 / NBRC 100440</strain>
    </source>
</reference>
<evidence type="ECO:0000255" key="1"/>
<evidence type="ECO:0000305" key="2"/>
<protein>
    <recommendedName>
        <fullName>Uncharacterized membrane protein MJ1068</fullName>
    </recommendedName>
</protein>
<proteinExistence type="inferred from homology"/>
<accession>Q58467</accession>
<sequence>MSYKEKAVKGVSWHLLSYFLAAPIAYLVRVLYANEIPKLDVGLFYAVLDFFSMLVVFRAFGLDQALIRYIPKYLAENRLDMLKSSIVFVGILQTILAFIVAFLVVIFAPYIAEFYINNQGQFTGRLDLVINILIIMAMGYYFLDSIVAFFSNILTGFQLQNYASSTRVVRILSVFIFSLIFIYLFNVHNAYVPSVSYLLMAVVMIIIYGYIVVKKIFPKFAKEKVIFSRKLIRNLFSYGMYVMIGYAGSLILGYLDGICLTYFTGLNAVADYRNVAMPTVNILSYFAFSVGAVLFPMSSELWEKGYKKALSYGVEKVFLYSLIIVTPLAILMAYFPTVIINILFNPKYLSAAPAIQILSFGAMFLTFNSIGFNILNGIGRPNISTKILYIGASFNLIFNILLIPKFGIIGAAITTVFGYFIMWIFQIWFLNKLLEHQFLNKKWILVILVGIFSLIPVMFIKDLIDNVILQLFVCGVVYFGIYILGIFGLKIINIYEVKDIISKIIKR</sequence>
<organism>
    <name type="scientific">Methanocaldococcus jannaschii (strain ATCC 43067 / DSM 2661 / JAL-1 / JCM 10045 / NBRC 100440)</name>
    <name type="common">Methanococcus jannaschii</name>
    <dbReference type="NCBI Taxonomy" id="243232"/>
    <lineage>
        <taxon>Archaea</taxon>
        <taxon>Methanobacteriati</taxon>
        <taxon>Methanobacteriota</taxon>
        <taxon>Methanomada group</taxon>
        <taxon>Methanococci</taxon>
        <taxon>Methanococcales</taxon>
        <taxon>Methanocaldococcaceae</taxon>
        <taxon>Methanocaldococcus</taxon>
    </lineage>
</organism>
<dbReference type="EMBL" id="L77117">
    <property type="protein sequence ID" value="AAB99070.1"/>
    <property type="molecule type" value="Genomic_DNA"/>
</dbReference>
<dbReference type="PIR" id="B64433">
    <property type="entry name" value="B64433"/>
</dbReference>
<dbReference type="RefSeq" id="WP_010870580.1">
    <property type="nucleotide sequence ID" value="NC_000909.1"/>
</dbReference>
<dbReference type="SMR" id="Q58467"/>
<dbReference type="STRING" id="243232.MJ_1068"/>
<dbReference type="PaxDb" id="243232-MJ_1068"/>
<dbReference type="EnsemblBacteria" id="AAB99070">
    <property type="protein sequence ID" value="AAB99070"/>
    <property type="gene ID" value="MJ_1068"/>
</dbReference>
<dbReference type="GeneID" id="1451964"/>
<dbReference type="KEGG" id="mja:MJ_1068"/>
<dbReference type="eggNOG" id="arCOG02209">
    <property type="taxonomic scope" value="Archaea"/>
</dbReference>
<dbReference type="HOGENOM" id="CLU_022017_5_0_2"/>
<dbReference type="InParanoid" id="Q58467"/>
<dbReference type="OrthoDB" id="19148at2157"/>
<dbReference type="PhylomeDB" id="Q58467"/>
<dbReference type="Proteomes" id="UP000000805">
    <property type="component" value="Chromosome"/>
</dbReference>
<dbReference type="GO" id="GO:0005886">
    <property type="term" value="C:plasma membrane"/>
    <property type="evidence" value="ECO:0000318"/>
    <property type="project" value="GO_Central"/>
</dbReference>
<dbReference type="CDD" id="cd13128">
    <property type="entry name" value="MATE_Wzx_like"/>
    <property type="match status" value="1"/>
</dbReference>
<dbReference type="InterPro" id="IPR050833">
    <property type="entry name" value="Poly_Biosynth_Transport"/>
</dbReference>
<dbReference type="InterPro" id="IPR002797">
    <property type="entry name" value="Polysacc_synth"/>
</dbReference>
<dbReference type="PANTHER" id="PTHR30250:SF27">
    <property type="entry name" value="POLYSACCHARIDE BIOSYNTHESIS PROTEIN"/>
    <property type="match status" value="1"/>
</dbReference>
<dbReference type="PANTHER" id="PTHR30250">
    <property type="entry name" value="PST FAMILY PREDICTED COLANIC ACID TRANSPORTER"/>
    <property type="match status" value="1"/>
</dbReference>
<dbReference type="Pfam" id="PF01943">
    <property type="entry name" value="Polysacc_synt"/>
    <property type="match status" value="1"/>
</dbReference>
<name>Y1068_METJA</name>
<keyword id="KW-1003">Cell membrane</keyword>
<keyword id="KW-0472">Membrane</keyword>
<keyword id="KW-1185">Reference proteome</keyword>
<keyword id="KW-0812">Transmembrane</keyword>
<keyword id="KW-1133">Transmembrane helix</keyword>
<gene>
    <name type="ordered locus">MJ1068</name>
</gene>
<feature type="chain" id="PRO_0000166460" description="Uncharacterized membrane protein MJ1068">
    <location>
        <begin position="1"/>
        <end position="507"/>
    </location>
</feature>
<feature type="transmembrane region" description="Helical" evidence="1">
    <location>
        <begin position="8"/>
        <end position="28"/>
    </location>
</feature>
<feature type="transmembrane region" description="Helical" evidence="1">
    <location>
        <begin position="41"/>
        <end position="61"/>
    </location>
</feature>
<feature type="transmembrane region" description="Helical" evidence="1">
    <location>
        <begin position="86"/>
        <end position="106"/>
    </location>
</feature>
<feature type="transmembrane region" description="Helical" evidence="1">
    <location>
        <begin position="130"/>
        <end position="150"/>
    </location>
</feature>
<feature type="transmembrane region" description="Helical" evidence="1">
    <location>
        <begin position="171"/>
        <end position="191"/>
    </location>
</feature>
<feature type="transmembrane region" description="Helical" evidence="1">
    <location>
        <begin position="193"/>
        <end position="213"/>
    </location>
</feature>
<feature type="transmembrane region" description="Helical" evidence="1">
    <location>
        <begin position="235"/>
        <end position="255"/>
    </location>
</feature>
<feature type="transmembrane region" description="Helical" evidence="1">
    <location>
        <begin position="275"/>
        <end position="295"/>
    </location>
</feature>
<feature type="transmembrane region" description="Helical" evidence="1">
    <location>
        <begin position="323"/>
        <end position="343"/>
    </location>
</feature>
<feature type="transmembrane region" description="Helical" evidence="1">
    <location>
        <begin position="355"/>
        <end position="375"/>
    </location>
</feature>
<feature type="transmembrane region" description="Helical" evidence="1">
    <location>
        <begin position="387"/>
        <end position="407"/>
    </location>
</feature>
<feature type="transmembrane region" description="Helical" evidence="1">
    <location>
        <begin position="408"/>
        <end position="428"/>
    </location>
</feature>
<feature type="transmembrane region" description="Helical" evidence="1">
    <location>
        <begin position="444"/>
        <end position="464"/>
    </location>
</feature>
<feature type="transmembrane region" description="Helical" evidence="1">
    <location>
        <begin position="467"/>
        <end position="487"/>
    </location>
</feature>
<comment type="subcellular location">
    <subcellularLocation>
        <location evidence="2">Cell membrane</location>
        <topology evidence="2">Multi-pass membrane protein</topology>
    </subcellularLocation>
</comment>
<comment type="similarity">
    <text evidence="2">Belongs to the polysaccharide synthase family.</text>
</comment>